<feature type="chain" id="PRO_0000107561" description="Acetate kinase">
    <location>
        <begin position="1"/>
        <end position="398"/>
    </location>
</feature>
<feature type="active site" description="Proton donor/acceptor" evidence="1">
    <location>
        <position position="149"/>
    </location>
</feature>
<feature type="binding site" evidence="1">
    <location>
        <position position="7"/>
    </location>
    <ligand>
        <name>Mg(2+)</name>
        <dbReference type="ChEBI" id="CHEBI:18420"/>
    </ligand>
</feature>
<feature type="binding site" evidence="1">
    <location>
        <position position="14"/>
    </location>
    <ligand>
        <name>ATP</name>
        <dbReference type="ChEBI" id="CHEBI:30616"/>
    </ligand>
</feature>
<feature type="binding site" evidence="1">
    <location>
        <position position="92"/>
    </location>
    <ligand>
        <name>substrate</name>
    </ligand>
</feature>
<feature type="binding site" evidence="1">
    <location>
        <begin position="208"/>
        <end position="212"/>
    </location>
    <ligand>
        <name>ATP</name>
        <dbReference type="ChEBI" id="CHEBI:30616"/>
    </ligand>
</feature>
<feature type="binding site" evidence="1">
    <location>
        <begin position="283"/>
        <end position="285"/>
    </location>
    <ligand>
        <name>ATP</name>
        <dbReference type="ChEBI" id="CHEBI:30616"/>
    </ligand>
</feature>
<feature type="binding site" evidence="1">
    <location>
        <begin position="331"/>
        <end position="335"/>
    </location>
    <ligand>
        <name>ATP</name>
        <dbReference type="ChEBI" id="CHEBI:30616"/>
    </ligand>
</feature>
<feature type="binding site" evidence="1">
    <location>
        <position position="385"/>
    </location>
    <ligand>
        <name>Mg(2+)</name>
        <dbReference type="ChEBI" id="CHEBI:18420"/>
    </ligand>
</feature>
<feature type="site" description="Transition state stabilizer" evidence="1">
    <location>
        <position position="181"/>
    </location>
</feature>
<feature type="site" description="Transition state stabilizer" evidence="1">
    <location>
        <position position="241"/>
    </location>
</feature>
<comment type="function">
    <text evidence="1">Catalyzes the formation of acetyl phosphate from acetate and ATP. Can also catalyze the reverse reaction.</text>
</comment>
<comment type="catalytic activity">
    <reaction evidence="1">
        <text>acetate + ATP = acetyl phosphate + ADP</text>
        <dbReference type="Rhea" id="RHEA:11352"/>
        <dbReference type="ChEBI" id="CHEBI:22191"/>
        <dbReference type="ChEBI" id="CHEBI:30089"/>
        <dbReference type="ChEBI" id="CHEBI:30616"/>
        <dbReference type="ChEBI" id="CHEBI:456216"/>
        <dbReference type="EC" id="2.7.2.1"/>
    </reaction>
</comment>
<comment type="cofactor">
    <cofactor evidence="1">
        <name>Mg(2+)</name>
        <dbReference type="ChEBI" id="CHEBI:18420"/>
    </cofactor>
    <cofactor evidence="1">
        <name>Mn(2+)</name>
        <dbReference type="ChEBI" id="CHEBI:29035"/>
    </cofactor>
    <text evidence="1">Mg(2+). Can also accept Mn(2+).</text>
</comment>
<comment type="pathway">
    <text evidence="1">Metabolic intermediate biosynthesis; acetyl-CoA biosynthesis; acetyl-CoA from acetate: step 1/2.</text>
</comment>
<comment type="subunit">
    <text evidence="1">Homodimer.</text>
</comment>
<comment type="subcellular location">
    <subcellularLocation>
        <location evidence="1">Cytoplasm</location>
    </subcellularLocation>
</comment>
<comment type="similarity">
    <text evidence="1">Belongs to the acetokinase family.</text>
</comment>
<evidence type="ECO:0000255" key="1">
    <source>
        <dbReference type="HAMAP-Rule" id="MF_00020"/>
    </source>
</evidence>
<dbReference type="EC" id="2.7.2.1" evidence="1"/>
<dbReference type="EMBL" id="AE009951">
    <property type="protein sequence ID" value="AAL95367.1"/>
    <property type="molecule type" value="Genomic_DNA"/>
</dbReference>
<dbReference type="RefSeq" id="NP_604068.1">
    <property type="nucleotide sequence ID" value="NC_003454.1"/>
</dbReference>
<dbReference type="RefSeq" id="WP_011016959.1">
    <property type="nucleotide sequence ID" value="NZ_CP028101.1"/>
</dbReference>
<dbReference type="SMR" id="Q8RED7"/>
<dbReference type="FunCoup" id="Q8RED7">
    <property type="interactions" value="288"/>
</dbReference>
<dbReference type="STRING" id="190304.FN1171"/>
<dbReference type="PaxDb" id="190304-FN1171"/>
<dbReference type="EnsemblBacteria" id="AAL95367">
    <property type="protein sequence ID" value="AAL95367"/>
    <property type="gene ID" value="FN1171"/>
</dbReference>
<dbReference type="GeneID" id="79784151"/>
<dbReference type="KEGG" id="fnu:FN1171"/>
<dbReference type="PATRIC" id="fig|190304.8.peg.1736"/>
<dbReference type="eggNOG" id="COG0282">
    <property type="taxonomic scope" value="Bacteria"/>
</dbReference>
<dbReference type="HOGENOM" id="CLU_020352_0_1_0"/>
<dbReference type="InParanoid" id="Q8RED7"/>
<dbReference type="BioCyc" id="FNUC190304:G1FZS-1750-MONOMER"/>
<dbReference type="UniPathway" id="UPA00340">
    <property type="reaction ID" value="UER00458"/>
</dbReference>
<dbReference type="Proteomes" id="UP000002521">
    <property type="component" value="Chromosome"/>
</dbReference>
<dbReference type="GO" id="GO:0005737">
    <property type="term" value="C:cytoplasm"/>
    <property type="evidence" value="ECO:0007669"/>
    <property type="project" value="UniProtKB-SubCell"/>
</dbReference>
<dbReference type="GO" id="GO:0008776">
    <property type="term" value="F:acetate kinase activity"/>
    <property type="evidence" value="ECO:0000318"/>
    <property type="project" value="GO_Central"/>
</dbReference>
<dbReference type="GO" id="GO:0005524">
    <property type="term" value="F:ATP binding"/>
    <property type="evidence" value="ECO:0007669"/>
    <property type="project" value="UniProtKB-KW"/>
</dbReference>
<dbReference type="GO" id="GO:0000287">
    <property type="term" value="F:magnesium ion binding"/>
    <property type="evidence" value="ECO:0007669"/>
    <property type="project" value="UniProtKB-UniRule"/>
</dbReference>
<dbReference type="GO" id="GO:0006083">
    <property type="term" value="P:acetate metabolic process"/>
    <property type="evidence" value="ECO:0000318"/>
    <property type="project" value="GO_Central"/>
</dbReference>
<dbReference type="GO" id="GO:0006085">
    <property type="term" value="P:acetyl-CoA biosynthetic process"/>
    <property type="evidence" value="ECO:0007669"/>
    <property type="project" value="UniProtKB-UniRule"/>
</dbReference>
<dbReference type="CDD" id="cd24010">
    <property type="entry name" value="ASKHA_NBD_AcK_PK"/>
    <property type="match status" value="1"/>
</dbReference>
<dbReference type="Gene3D" id="3.30.420.40">
    <property type="match status" value="2"/>
</dbReference>
<dbReference type="HAMAP" id="MF_00020">
    <property type="entry name" value="Acetate_kinase"/>
    <property type="match status" value="1"/>
</dbReference>
<dbReference type="InterPro" id="IPR004372">
    <property type="entry name" value="Ac/propionate_kinase"/>
</dbReference>
<dbReference type="InterPro" id="IPR000890">
    <property type="entry name" value="Aliphatic_acid_kin_short-chain"/>
</dbReference>
<dbReference type="InterPro" id="IPR023865">
    <property type="entry name" value="Aliphatic_acid_kinase_CS"/>
</dbReference>
<dbReference type="InterPro" id="IPR043129">
    <property type="entry name" value="ATPase_NBD"/>
</dbReference>
<dbReference type="NCBIfam" id="TIGR00016">
    <property type="entry name" value="ackA"/>
    <property type="match status" value="1"/>
</dbReference>
<dbReference type="PANTHER" id="PTHR21060">
    <property type="entry name" value="ACETATE KINASE"/>
    <property type="match status" value="1"/>
</dbReference>
<dbReference type="PANTHER" id="PTHR21060:SF15">
    <property type="entry name" value="ACETATE KINASE-RELATED"/>
    <property type="match status" value="1"/>
</dbReference>
<dbReference type="Pfam" id="PF00871">
    <property type="entry name" value="Acetate_kinase"/>
    <property type="match status" value="1"/>
</dbReference>
<dbReference type="PIRSF" id="PIRSF000722">
    <property type="entry name" value="Acetate_prop_kin"/>
    <property type="match status" value="1"/>
</dbReference>
<dbReference type="PRINTS" id="PR00471">
    <property type="entry name" value="ACETATEKNASE"/>
</dbReference>
<dbReference type="SUPFAM" id="SSF53067">
    <property type="entry name" value="Actin-like ATPase domain"/>
    <property type="match status" value="2"/>
</dbReference>
<dbReference type="PROSITE" id="PS01075">
    <property type="entry name" value="ACETATE_KINASE_1"/>
    <property type="match status" value="1"/>
</dbReference>
<dbReference type="PROSITE" id="PS01076">
    <property type="entry name" value="ACETATE_KINASE_2"/>
    <property type="match status" value="1"/>
</dbReference>
<proteinExistence type="inferred from homology"/>
<sequence>MKILVINCGSSSLKYQLINPETEEVFAKGLCERIGIDGSKLEYEVVAKDFEKKLETPMPSHKEALELVISHLTDKEIGVIASVDEVDAIGHRVVHGGEEFAQSVLINDAVLKAIEANNDLAPLHNPANLMGIRTCMELMPGKKNVAVFDTAFHQTMKPEAFMYPLPYEDYKELKVRKYGFHGTSHLYVSGIMREIMGNPEHSKIIVCHLGNGASITAVKDGKSVDTSMGLTPLQGLMMGTRCGDIDPAAVLFVKNKRGLTDAQMDDRMNKKSGILGLFGKSSDCRDLENAVVEGDERAILAESVSMHRLRSYIGAYAAIMGGVDAICFTGGIGENSSMTREKALEGLEFLGVELDKEINSVRKKGNVKLSKDSSKVLIYKIPTNEELVIARDTFRLAK</sequence>
<reference key="1">
    <citation type="journal article" date="2002" name="J. Bacteriol.">
        <title>Genome sequence and analysis of the oral bacterium Fusobacterium nucleatum strain ATCC 25586.</title>
        <authorList>
            <person name="Kapatral V."/>
            <person name="Anderson I."/>
            <person name="Ivanova N."/>
            <person name="Reznik G."/>
            <person name="Los T."/>
            <person name="Lykidis A."/>
            <person name="Bhattacharyya A."/>
            <person name="Bartman A."/>
            <person name="Gardner W."/>
            <person name="Grechkin G."/>
            <person name="Zhu L."/>
            <person name="Vasieva O."/>
            <person name="Chu L."/>
            <person name="Kogan Y."/>
            <person name="Chaga O."/>
            <person name="Goltsman E."/>
            <person name="Bernal A."/>
            <person name="Larsen N."/>
            <person name="D'Souza M."/>
            <person name="Walunas T."/>
            <person name="Pusch G."/>
            <person name="Haselkorn R."/>
            <person name="Fonstein M."/>
            <person name="Kyrpides N.C."/>
            <person name="Overbeek R."/>
        </authorList>
    </citation>
    <scope>NUCLEOTIDE SEQUENCE [LARGE SCALE GENOMIC DNA]</scope>
    <source>
        <strain>ATCC 25586 / DSM 15643 / BCRC 10681 / CIP 101130 / JCM 8532 / KCTC 2640 / LMG 13131 / VPI 4355</strain>
    </source>
</reference>
<accession>Q8RED7</accession>
<gene>
    <name evidence="1" type="primary">ackA</name>
    <name type="ordered locus">FN1171</name>
</gene>
<organism>
    <name type="scientific">Fusobacterium nucleatum subsp. nucleatum (strain ATCC 25586 / DSM 15643 / BCRC 10681 / CIP 101130 / JCM 8532 / KCTC 2640 / LMG 13131 / VPI 4355)</name>
    <dbReference type="NCBI Taxonomy" id="190304"/>
    <lineage>
        <taxon>Bacteria</taxon>
        <taxon>Fusobacteriati</taxon>
        <taxon>Fusobacteriota</taxon>
        <taxon>Fusobacteriia</taxon>
        <taxon>Fusobacteriales</taxon>
        <taxon>Fusobacteriaceae</taxon>
        <taxon>Fusobacterium</taxon>
    </lineage>
</organism>
<name>ACKA_FUSNN</name>
<keyword id="KW-0067">ATP-binding</keyword>
<keyword id="KW-0963">Cytoplasm</keyword>
<keyword id="KW-0418">Kinase</keyword>
<keyword id="KW-0460">Magnesium</keyword>
<keyword id="KW-0479">Metal-binding</keyword>
<keyword id="KW-0547">Nucleotide-binding</keyword>
<keyword id="KW-1185">Reference proteome</keyword>
<keyword id="KW-0808">Transferase</keyword>
<protein>
    <recommendedName>
        <fullName evidence="1">Acetate kinase</fullName>
        <ecNumber evidence="1">2.7.2.1</ecNumber>
    </recommendedName>
    <alternativeName>
        <fullName evidence="1">Acetokinase</fullName>
    </alternativeName>
</protein>